<proteinExistence type="evidence at transcript level"/>
<evidence type="ECO:0000250" key="1">
    <source>
        <dbReference type="UniProtKB" id="O88384"/>
    </source>
</evidence>
<evidence type="ECO:0000250" key="2">
    <source>
        <dbReference type="UniProtKB" id="Q9UEU0"/>
    </source>
</evidence>
<evidence type="ECO:0000255" key="3"/>
<evidence type="ECO:0000305" key="4"/>
<keyword id="KW-0007">Acetylation</keyword>
<keyword id="KW-0175">Coiled coil</keyword>
<keyword id="KW-0967">Endosome</keyword>
<keyword id="KW-0458">Lysosome</keyword>
<keyword id="KW-0472">Membrane</keyword>
<keyword id="KW-0488">Methylation</keyword>
<keyword id="KW-0597">Phosphoprotein</keyword>
<keyword id="KW-0653">Protein transport</keyword>
<keyword id="KW-1185">Reference proteome</keyword>
<keyword id="KW-0812">Transmembrane</keyword>
<keyword id="KW-1133">Transmembrane helix</keyword>
<keyword id="KW-0813">Transport</keyword>
<dbReference type="EMBL" id="BC112511">
    <property type="protein sequence ID" value="AAI12512.1"/>
    <property type="molecule type" value="mRNA"/>
</dbReference>
<dbReference type="RefSeq" id="NP_001073115.1">
    <property type="nucleotide sequence ID" value="NM_001079647.2"/>
</dbReference>
<dbReference type="SMR" id="Q2KIU0"/>
<dbReference type="FunCoup" id="Q2KIU0">
    <property type="interactions" value="1779"/>
</dbReference>
<dbReference type="STRING" id="9913.ENSBTAP00000056932"/>
<dbReference type="PaxDb" id="9913-ENSBTAP00000002532"/>
<dbReference type="GeneID" id="780809"/>
<dbReference type="KEGG" id="bta:780809"/>
<dbReference type="CTD" id="10490"/>
<dbReference type="eggNOG" id="KOG1666">
    <property type="taxonomic scope" value="Eukaryota"/>
</dbReference>
<dbReference type="InParanoid" id="Q2KIU0"/>
<dbReference type="OrthoDB" id="430637at2759"/>
<dbReference type="Proteomes" id="UP000009136">
    <property type="component" value="Unplaced"/>
</dbReference>
<dbReference type="GO" id="GO:0005829">
    <property type="term" value="C:cytosol"/>
    <property type="evidence" value="ECO:0007669"/>
    <property type="project" value="GOC"/>
</dbReference>
<dbReference type="GO" id="GO:0031901">
    <property type="term" value="C:early endosome membrane"/>
    <property type="evidence" value="ECO:0007669"/>
    <property type="project" value="UniProtKB-SubCell"/>
</dbReference>
<dbReference type="GO" id="GO:0005789">
    <property type="term" value="C:endoplasmic reticulum membrane"/>
    <property type="evidence" value="ECO:0000318"/>
    <property type="project" value="GO_Central"/>
</dbReference>
<dbReference type="GO" id="GO:0012507">
    <property type="term" value="C:ER to Golgi transport vesicle membrane"/>
    <property type="evidence" value="ECO:0000318"/>
    <property type="project" value="GO_Central"/>
</dbReference>
<dbReference type="GO" id="GO:0005794">
    <property type="term" value="C:Golgi apparatus"/>
    <property type="evidence" value="ECO:0000318"/>
    <property type="project" value="GO_Central"/>
</dbReference>
<dbReference type="GO" id="GO:0031902">
    <property type="term" value="C:late endosome membrane"/>
    <property type="evidence" value="ECO:0000250"/>
    <property type="project" value="UniProtKB"/>
</dbReference>
<dbReference type="GO" id="GO:0005765">
    <property type="term" value="C:lysosomal membrane"/>
    <property type="evidence" value="ECO:0000250"/>
    <property type="project" value="UniProtKB"/>
</dbReference>
<dbReference type="GO" id="GO:0055038">
    <property type="term" value="C:recycling endosome membrane"/>
    <property type="evidence" value="ECO:0007669"/>
    <property type="project" value="UniProtKB-SubCell"/>
</dbReference>
<dbReference type="GO" id="GO:0031201">
    <property type="term" value="C:SNARE complex"/>
    <property type="evidence" value="ECO:0000318"/>
    <property type="project" value="GO_Central"/>
</dbReference>
<dbReference type="GO" id="GO:0005484">
    <property type="term" value="F:SNAP receptor activity"/>
    <property type="evidence" value="ECO:0000318"/>
    <property type="project" value="GO_Central"/>
</dbReference>
<dbReference type="GO" id="GO:0000149">
    <property type="term" value="F:SNARE binding"/>
    <property type="evidence" value="ECO:0000318"/>
    <property type="project" value="GO_Central"/>
</dbReference>
<dbReference type="GO" id="GO:0006896">
    <property type="term" value="P:Golgi to vacuole transport"/>
    <property type="evidence" value="ECO:0000318"/>
    <property type="project" value="GO_Central"/>
</dbReference>
<dbReference type="GO" id="GO:0006891">
    <property type="term" value="P:intra-Golgi vesicle-mediated transport"/>
    <property type="evidence" value="ECO:0000318"/>
    <property type="project" value="GO_Central"/>
</dbReference>
<dbReference type="GO" id="GO:0006886">
    <property type="term" value="P:intracellular protein transport"/>
    <property type="evidence" value="ECO:0007669"/>
    <property type="project" value="InterPro"/>
</dbReference>
<dbReference type="GO" id="GO:0016236">
    <property type="term" value="P:macroautophagy"/>
    <property type="evidence" value="ECO:0000318"/>
    <property type="project" value="GO_Central"/>
</dbReference>
<dbReference type="GO" id="GO:1903076">
    <property type="term" value="P:regulation of protein localization to plasma membrane"/>
    <property type="evidence" value="ECO:0000318"/>
    <property type="project" value="GO_Central"/>
</dbReference>
<dbReference type="GO" id="GO:0042147">
    <property type="term" value="P:retrograde transport, endosome to Golgi"/>
    <property type="evidence" value="ECO:0000318"/>
    <property type="project" value="GO_Central"/>
</dbReference>
<dbReference type="GO" id="GO:0048280">
    <property type="term" value="P:vesicle fusion with Golgi apparatus"/>
    <property type="evidence" value="ECO:0000318"/>
    <property type="project" value="GO_Central"/>
</dbReference>
<dbReference type="CDD" id="cd15890">
    <property type="entry name" value="SNARE_Vti1b"/>
    <property type="match status" value="1"/>
</dbReference>
<dbReference type="FunFam" id="1.20.58.400:FF:000003">
    <property type="entry name" value="Vesicle transport through interaction with t-SNAREs homolog 1B"/>
    <property type="match status" value="1"/>
</dbReference>
<dbReference type="FunFam" id="1.20.5.110:FF:000002">
    <property type="entry name" value="Vesicle transport through interaction with t-SNAREsB"/>
    <property type="match status" value="1"/>
</dbReference>
<dbReference type="Gene3D" id="1.20.5.110">
    <property type="match status" value="1"/>
</dbReference>
<dbReference type="Gene3D" id="1.20.58.400">
    <property type="entry name" value="t-snare proteins"/>
    <property type="match status" value="1"/>
</dbReference>
<dbReference type="InterPro" id="IPR010989">
    <property type="entry name" value="SNARE"/>
</dbReference>
<dbReference type="InterPro" id="IPR000727">
    <property type="entry name" value="T_SNARE_dom"/>
</dbReference>
<dbReference type="InterPro" id="IPR038407">
    <property type="entry name" value="v-SNARE_N_sf"/>
</dbReference>
<dbReference type="InterPro" id="IPR007705">
    <property type="entry name" value="Vesicle_trsprt_v-SNARE_N"/>
</dbReference>
<dbReference type="PANTHER" id="PTHR21230:SF89">
    <property type="entry name" value="VESICLE TRANSPORT THROUGH INTERACTION WITH T-SNARES HOMOLOG 1B"/>
    <property type="match status" value="1"/>
</dbReference>
<dbReference type="PANTHER" id="PTHR21230">
    <property type="entry name" value="VESICLE TRANSPORT V-SNARE PROTEIN VTI1-RELATED"/>
    <property type="match status" value="1"/>
</dbReference>
<dbReference type="Pfam" id="PF05008">
    <property type="entry name" value="V-SNARE"/>
    <property type="match status" value="1"/>
</dbReference>
<dbReference type="Pfam" id="PF12352">
    <property type="entry name" value="V-SNARE_C"/>
    <property type="match status" value="1"/>
</dbReference>
<dbReference type="SMART" id="SM00397">
    <property type="entry name" value="t_SNARE"/>
    <property type="match status" value="1"/>
</dbReference>
<dbReference type="SUPFAM" id="SSF58038">
    <property type="entry name" value="SNARE fusion complex"/>
    <property type="match status" value="1"/>
</dbReference>
<dbReference type="SUPFAM" id="SSF47661">
    <property type="entry name" value="t-snare proteins"/>
    <property type="match status" value="1"/>
</dbReference>
<accession>Q2KIU0</accession>
<organism>
    <name type="scientific">Bos taurus</name>
    <name type="common">Bovine</name>
    <dbReference type="NCBI Taxonomy" id="9913"/>
    <lineage>
        <taxon>Eukaryota</taxon>
        <taxon>Metazoa</taxon>
        <taxon>Chordata</taxon>
        <taxon>Craniata</taxon>
        <taxon>Vertebrata</taxon>
        <taxon>Euteleostomi</taxon>
        <taxon>Mammalia</taxon>
        <taxon>Eutheria</taxon>
        <taxon>Laurasiatheria</taxon>
        <taxon>Artiodactyla</taxon>
        <taxon>Ruminantia</taxon>
        <taxon>Pecora</taxon>
        <taxon>Bovidae</taxon>
        <taxon>Bovinae</taxon>
        <taxon>Bos</taxon>
    </lineage>
</organism>
<reference key="1">
    <citation type="submission" date="2006-01" db="EMBL/GenBank/DDBJ databases">
        <authorList>
            <consortium name="NIH - Mammalian Gene Collection (MGC) project"/>
        </authorList>
    </citation>
    <scope>NUCLEOTIDE SEQUENCE [LARGE SCALE MRNA]</scope>
    <source>
        <strain>Hereford</strain>
        <tissue>Testis</tissue>
    </source>
</reference>
<feature type="initiator methionine" description="Removed" evidence="2">
    <location>
        <position position="1"/>
    </location>
</feature>
<feature type="chain" id="PRO_0000285575" description="Vesicle transport through interaction with t-SNAREs homolog 1B">
    <location>
        <begin position="2"/>
        <end position="232"/>
    </location>
</feature>
<feature type="topological domain" description="Cytoplasmic" evidence="3">
    <location>
        <begin position="2"/>
        <end position="208"/>
    </location>
</feature>
<feature type="transmembrane region" description="Helical; Anchor for type IV membrane protein" evidence="3">
    <location>
        <begin position="209"/>
        <end position="229"/>
    </location>
</feature>
<feature type="topological domain" description="Vesicular" evidence="3">
    <location>
        <begin position="230"/>
        <end position="232"/>
    </location>
</feature>
<feature type="region of interest" description="Interaction with CLINT1" evidence="2">
    <location>
        <begin position="2"/>
        <end position="23"/>
    </location>
</feature>
<feature type="region of interest" description="Interaction with CLINT1" evidence="2">
    <location>
        <begin position="69"/>
        <end position="73"/>
    </location>
</feature>
<feature type="coiled-coil region" evidence="3">
    <location>
        <begin position="35"/>
        <end position="98"/>
    </location>
</feature>
<feature type="coiled-coil region" evidence="3">
    <location>
        <begin position="161"/>
        <end position="198"/>
    </location>
</feature>
<feature type="modified residue" description="N-acetylalanine" evidence="2">
    <location>
        <position position="2"/>
    </location>
</feature>
<feature type="modified residue" description="Phosphothreonine" evidence="2">
    <location>
        <position position="103"/>
    </location>
</feature>
<feature type="modified residue" description="Omega-N-methylarginine" evidence="2">
    <location>
        <position position="107"/>
    </location>
</feature>
<feature type="modified residue" description="Phosphoserine" evidence="2">
    <location>
        <position position="138"/>
    </location>
</feature>
<comment type="function">
    <text evidence="2">V-SNARE that mediates vesicle transport pathways through interactions with t-SNAREs on the target membrane. These interactions are proposed to mediate aspects of the specificity of vesicle trafficking and to promote fusion of the lipid bilayers. May be concerned with increased secretion of cytokines associated with cellular senescence.</text>
</comment>
<comment type="subunit">
    <text evidence="1 2">Forms a SNARE complex with STX7, STX8 and VAMP8 which functions in the homotypic fusion of late endosomes. Component of the SNARE complex composed of STX7, STX8, VAMP7 and VIT1B that is required for heterotypic fusion of late endosomes with lysosomes (By similarity). May interact with STX17. Interacts with CLINT1 (By similarity).</text>
</comment>
<comment type="subcellular location">
    <subcellularLocation>
        <location evidence="2">Early endosome membrane</location>
        <topology evidence="3">Single-pass type IV membrane protein</topology>
    </subcellularLocation>
    <subcellularLocation>
        <location evidence="2">Late endosome membrane</location>
        <topology evidence="2">Single-pass type IV membrane protein</topology>
    </subcellularLocation>
    <subcellularLocation>
        <location evidence="2">Lysosome membrane</location>
    </subcellularLocation>
    <subcellularLocation>
        <location evidence="2">Cytoplasmic granule</location>
    </subcellularLocation>
    <subcellularLocation>
        <location evidence="2">Recycling endosome membrane</location>
        <topology evidence="3">Single-pass type IV membrane protein</topology>
    </subcellularLocation>
</comment>
<comment type="similarity">
    <text evidence="4">Belongs to the VTI1 family.</text>
</comment>
<sequence>MATSAASSEHFEKLHEIFRGLHEDLRGVPERLLGMAGTEEKKKLIRDFDEKQQEANETLAEMEEELRYAPLSFRNPMMSKLRTYRKDLAKLHREVRSTPLTATPGARGDMKYGTYAVENEHMNRLQSQRALLLQGTDSLNRATQSIERSHRIAAETDQIGSEIIEELGEQRDQLERTKSRLVNTSENLSKSRKILRSMSRKVTTNKLLLSIVILLELAILGGLVYYKFLRRH</sequence>
<protein>
    <recommendedName>
        <fullName>Vesicle transport through interaction with t-SNAREs homolog 1B</fullName>
    </recommendedName>
</protein>
<gene>
    <name type="primary">VTI1B</name>
</gene>
<name>VTI1B_BOVIN</name>